<protein>
    <recommendedName>
        <fullName evidence="3">Senescence/dehydration-associated protein At3g51250</fullName>
    </recommendedName>
</protein>
<gene>
    <name evidence="4" type="ordered locus">At3g51250</name>
    <name evidence="5" type="ORF">F24M12.290</name>
</gene>
<reference key="1">
    <citation type="journal article" date="2000" name="Nature">
        <title>Sequence and analysis of chromosome 3 of the plant Arabidopsis thaliana.</title>
        <authorList>
            <person name="Salanoubat M."/>
            <person name="Lemcke K."/>
            <person name="Rieger M."/>
            <person name="Ansorge W."/>
            <person name="Unseld M."/>
            <person name="Fartmann B."/>
            <person name="Valle G."/>
            <person name="Bloecker H."/>
            <person name="Perez-Alonso M."/>
            <person name="Obermaier B."/>
            <person name="Delseny M."/>
            <person name="Boutry M."/>
            <person name="Grivell L.A."/>
            <person name="Mache R."/>
            <person name="Puigdomenech P."/>
            <person name="De Simone V."/>
            <person name="Choisne N."/>
            <person name="Artiguenave F."/>
            <person name="Robert C."/>
            <person name="Brottier P."/>
            <person name="Wincker P."/>
            <person name="Cattolico L."/>
            <person name="Weissenbach J."/>
            <person name="Saurin W."/>
            <person name="Quetier F."/>
            <person name="Schaefer M."/>
            <person name="Mueller-Auer S."/>
            <person name="Gabel C."/>
            <person name="Fuchs M."/>
            <person name="Benes V."/>
            <person name="Wurmbach E."/>
            <person name="Drzonek H."/>
            <person name="Erfle H."/>
            <person name="Jordan N."/>
            <person name="Bangert S."/>
            <person name="Wiedelmann R."/>
            <person name="Kranz H."/>
            <person name="Voss H."/>
            <person name="Holland R."/>
            <person name="Brandt P."/>
            <person name="Nyakatura G."/>
            <person name="Vezzi A."/>
            <person name="D'Angelo M."/>
            <person name="Pallavicini A."/>
            <person name="Toppo S."/>
            <person name="Simionati B."/>
            <person name="Conrad A."/>
            <person name="Hornischer K."/>
            <person name="Kauer G."/>
            <person name="Loehnert T.-H."/>
            <person name="Nordsiek G."/>
            <person name="Reichelt J."/>
            <person name="Scharfe M."/>
            <person name="Schoen O."/>
            <person name="Bargues M."/>
            <person name="Terol J."/>
            <person name="Climent J."/>
            <person name="Navarro P."/>
            <person name="Collado C."/>
            <person name="Perez-Perez A."/>
            <person name="Ottenwaelder B."/>
            <person name="Duchemin D."/>
            <person name="Cooke R."/>
            <person name="Laudie M."/>
            <person name="Berger-Llauro C."/>
            <person name="Purnelle B."/>
            <person name="Masuy D."/>
            <person name="de Haan M."/>
            <person name="Maarse A.C."/>
            <person name="Alcaraz J.-P."/>
            <person name="Cottet A."/>
            <person name="Casacuberta E."/>
            <person name="Monfort A."/>
            <person name="Argiriou A."/>
            <person name="Flores M."/>
            <person name="Liguori R."/>
            <person name="Vitale D."/>
            <person name="Mannhaupt G."/>
            <person name="Haase D."/>
            <person name="Schoof H."/>
            <person name="Rudd S."/>
            <person name="Zaccaria P."/>
            <person name="Mewes H.-W."/>
            <person name="Mayer K.F.X."/>
            <person name="Kaul S."/>
            <person name="Town C.D."/>
            <person name="Koo H.L."/>
            <person name="Tallon L.J."/>
            <person name="Jenkins J."/>
            <person name="Rooney T."/>
            <person name="Rizzo M."/>
            <person name="Walts A."/>
            <person name="Utterback T."/>
            <person name="Fujii C.Y."/>
            <person name="Shea T.P."/>
            <person name="Creasy T.H."/>
            <person name="Haas B."/>
            <person name="Maiti R."/>
            <person name="Wu D."/>
            <person name="Peterson J."/>
            <person name="Van Aken S."/>
            <person name="Pai G."/>
            <person name="Militscher J."/>
            <person name="Sellers P."/>
            <person name="Gill J.E."/>
            <person name="Feldblyum T.V."/>
            <person name="Preuss D."/>
            <person name="Lin X."/>
            <person name="Nierman W.C."/>
            <person name="Salzberg S.L."/>
            <person name="White O."/>
            <person name="Venter J.C."/>
            <person name="Fraser C.M."/>
            <person name="Kaneko T."/>
            <person name="Nakamura Y."/>
            <person name="Sato S."/>
            <person name="Kato T."/>
            <person name="Asamizu E."/>
            <person name="Sasamoto S."/>
            <person name="Kimura T."/>
            <person name="Idesawa K."/>
            <person name="Kawashima K."/>
            <person name="Kishida Y."/>
            <person name="Kiyokawa C."/>
            <person name="Kohara M."/>
            <person name="Matsumoto M."/>
            <person name="Matsuno A."/>
            <person name="Muraki A."/>
            <person name="Nakayama S."/>
            <person name="Nakazaki N."/>
            <person name="Shinpo S."/>
            <person name="Takeuchi C."/>
            <person name="Wada T."/>
            <person name="Watanabe A."/>
            <person name="Yamada M."/>
            <person name="Yasuda M."/>
            <person name="Tabata S."/>
        </authorList>
    </citation>
    <scope>NUCLEOTIDE SEQUENCE [LARGE SCALE GENOMIC DNA]</scope>
    <source>
        <strain>cv. Columbia</strain>
    </source>
</reference>
<reference key="2">
    <citation type="journal article" date="2017" name="Plant J.">
        <title>Araport11: a complete reannotation of the Arabidopsis thaliana reference genome.</title>
        <authorList>
            <person name="Cheng C.Y."/>
            <person name="Krishnakumar V."/>
            <person name="Chan A.P."/>
            <person name="Thibaud-Nissen F."/>
            <person name="Schobel S."/>
            <person name="Town C.D."/>
        </authorList>
    </citation>
    <scope>GENOME REANNOTATION</scope>
    <source>
        <strain>cv. Columbia</strain>
    </source>
</reference>
<reference key="3">
    <citation type="journal article" date="2003" name="Science">
        <title>Empirical analysis of transcriptional activity in the Arabidopsis genome.</title>
        <authorList>
            <person name="Yamada K."/>
            <person name="Lim J."/>
            <person name="Dale J.M."/>
            <person name="Chen H."/>
            <person name="Shinn P."/>
            <person name="Palm C.J."/>
            <person name="Southwick A.M."/>
            <person name="Wu H.C."/>
            <person name="Kim C.J."/>
            <person name="Nguyen M."/>
            <person name="Pham P.K."/>
            <person name="Cheuk R.F."/>
            <person name="Karlin-Newmann G."/>
            <person name="Liu S.X."/>
            <person name="Lam B."/>
            <person name="Sakano H."/>
            <person name="Wu T."/>
            <person name="Yu G."/>
            <person name="Miranda M."/>
            <person name="Quach H.L."/>
            <person name="Tripp M."/>
            <person name="Chang C.H."/>
            <person name="Lee J.M."/>
            <person name="Toriumi M.J."/>
            <person name="Chan M.M."/>
            <person name="Tang C.C."/>
            <person name="Onodera C.S."/>
            <person name="Deng J.M."/>
            <person name="Akiyama K."/>
            <person name="Ansari Y."/>
            <person name="Arakawa T."/>
            <person name="Banh J."/>
            <person name="Banno F."/>
            <person name="Bowser L."/>
            <person name="Brooks S.Y."/>
            <person name="Carninci P."/>
            <person name="Chao Q."/>
            <person name="Choy N."/>
            <person name="Enju A."/>
            <person name="Goldsmith A.D."/>
            <person name="Gurjal M."/>
            <person name="Hansen N.F."/>
            <person name="Hayashizaki Y."/>
            <person name="Johnson-Hopson C."/>
            <person name="Hsuan V.W."/>
            <person name="Iida K."/>
            <person name="Karnes M."/>
            <person name="Khan S."/>
            <person name="Koesema E."/>
            <person name="Ishida J."/>
            <person name="Jiang P.X."/>
            <person name="Jones T."/>
            <person name="Kawai J."/>
            <person name="Kamiya A."/>
            <person name="Meyers C."/>
            <person name="Nakajima M."/>
            <person name="Narusaka M."/>
            <person name="Seki M."/>
            <person name="Sakurai T."/>
            <person name="Satou M."/>
            <person name="Tamse R."/>
            <person name="Vaysberg M."/>
            <person name="Wallender E.K."/>
            <person name="Wong C."/>
            <person name="Yamamura Y."/>
            <person name="Yuan S."/>
            <person name="Shinozaki K."/>
            <person name="Davis R.W."/>
            <person name="Theologis A."/>
            <person name="Ecker J.R."/>
        </authorList>
    </citation>
    <scope>NUCLEOTIDE SEQUENCE [LARGE SCALE MRNA]</scope>
    <source>
        <strain>cv. Columbia</strain>
    </source>
</reference>
<feature type="chain" id="PRO_0000436972" description="Senescence/dehydration-associated protein At3g51250">
    <location>
        <begin position="1"/>
        <end position="463"/>
    </location>
</feature>
<feature type="domain" description="Senescence" evidence="1">
    <location>
        <begin position="269"/>
        <end position="437"/>
    </location>
</feature>
<feature type="region of interest" description="Disordered" evidence="2">
    <location>
        <begin position="1"/>
        <end position="31"/>
    </location>
</feature>
<feature type="region of interest" description="Disordered" evidence="2">
    <location>
        <begin position="52"/>
        <end position="74"/>
    </location>
</feature>
<feature type="region of interest" description="Disordered" evidence="2">
    <location>
        <begin position="146"/>
        <end position="172"/>
    </location>
</feature>
<feature type="compositionally biased region" description="Basic and acidic residues" evidence="2">
    <location>
        <begin position="1"/>
        <end position="12"/>
    </location>
</feature>
<feature type="compositionally biased region" description="Polar residues" evidence="2">
    <location>
        <begin position="19"/>
        <end position="31"/>
    </location>
</feature>
<proteinExistence type="evidence at transcript level"/>
<keyword id="KW-1185">Reference proteome</keyword>
<name>SDEH3_ARATH</name>
<organism>
    <name type="scientific">Arabidopsis thaliana</name>
    <name type="common">Mouse-ear cress</name>
    <dbReference type="NCBI Taxonomy" id="3702"/>
    <lineage>
        <taxon>Eukaryota</taxon>
        <taxon>Viridiplantae</taxon>
        <taxon>Streptophyta</taxon>
        <taxon>Embryophyta</taxon>
        <taxon>Tracheophyta</taxon>
        <taxon>Spermatophyta</taxon>
        <taxon>Magnoliopsida</taxon>
        <taxon>eudicotyledons</taxon>
        <taxon>Gunneridae</taxon>
        <taxon>Pentapetalae</taxon>
        <taxon>rosids</taxon>
        <taxon>malvids</taxon>
        <taxon>Brassicales</taxon>
        <taxon>Brassicaceae</taxon>
        <taxon>Camelineae</taxon>
        <taxon>Arabidopsis</taxon>
    </lineage>
</organism>
<sequence>MNPSHGGDDKQRPAMYPQVDQSIPDNPFASTNPYVASSPYLYPSLSSHNLGPNLFPDHGDASNDQSPSAPPQATEEVLIRVPGAILNLIDKSYSVELACGDFTIVRIIQGQNIVAVLANVGNEIQWPLTKNEVAAKVDGSHYFFSIHPPKEKGQGSGSDSDDEQGQKSKSKSDDEILNYGLTIASKGQENVLLVLDQVLRDYSCFTEQRMSEKAKETGEEVLGNSVVADTSPEELKGERKDVVEGQCAAYWTTLAPNVEDYTHSTAKMIASGSGKLIRGILWCGDVTVERLKKGNEVMKNRLSRAEKEKDVSPETLRRIKRVKRVTQMTEKVATGVLSGVVKVSGFITGSMANSKAGKKLFGLLPGEIVLASLDGFSKICDAVEVAGKNVMSTSSTVTTELVNHRYGTKAAEATNEGLDAAGHAFGTAWVAFKIRKAFNPKNVIKPSSLAKSVSELKAKKGSK</sequence>
<evidence type="ECO:0000255" key="1"/>
<evidence type="ECO:0000256" key="2">
    <source>
        <dbReference type="SAM" id="MobiDB-lite"/>
    </source>
</evidence>
<evidence type="ECO:0000305" key="3"/>
<evidence type="ECO:0000312" key="4">
    <source>
        <dbReference type="Araport" id="AT3G51250"/>
    </source>
</evidence>
<evidence type="ECO:0000312" key="5">
    <source>
        <dbReference type="EMBL" id="CAB62647.1"/>
    </source>
</evidence>
<accession>Q9SD22</accession>
<dbReference type="EMBL" id="AL132980">
    <property type="protein sequence ID" value="CAB62647.1"/>
    <property type="molecule type" value="Genomic_DNA"/>
</dbReference>
<dbReference type="EMBL" id="CP002686">
    <property type="protein sequence ID" value="AEE78768.1"/>
    <property type="molecule type" value="Genomic_DNA"/>
</dbReference>
<dbReference type="EMBL" id="AY050372">
    <property type="protein sequence ID" value="AAK91390.1"/>
    <property type="molecule type" value="mRNA"/>
</dbReference>
<dbReference type="EMBL" id="AY120694">
    <property type="protein sequence ID" value="AAM52237.1"/>
    <property type="molecule type" value="mRNA"/>
</dbReference>
<dbReference type="PIR" id="T45756">
    <property type="entry name" value="T45756"/>
</dbReference>
<dbReference type="RefSeq" id="NP_190693.1">
    <property type="nucleotide sequence ID" value="NM_114984.3"/>
</dbReference>
<dbReference type="SMR" id="Q9SD22"/>
<dbReference type="FunCoup" id="Q9SD22">
    <property type="interactions" value="1124"/>
</dbReference>
<dbReference type="STRING" id="3702.Q9SD22"/>
<dbReference type="iPTMnet" id="Q9SD22"/>
<dbReference type="MetOSite" id="Q9SD22"/>
<dbReference type="PaxDb" id="3702-AT3G51250.1"/>
<dbReference type="ProteomicsDB" id="232719"/>
<dbReference type="EnsemblPlants" id="AT3G51250.1">
    <property type="protein sequence ID" value="AT3G51250.1"/>
    <property type="gene ID" value="AT3G51250"/>
</dbReference>
<dbReference type="GeneID" id="824288"/>
<dbReference type="Gramene" id="AT3G51250.1">
    <property type="protein sequence ID" value="AT3G51250.1"/>
    <property type="gene ID" value="AT3G51250"/>
</dbReference>
<dbReference type="KEGG" id="ath:AT3G51250"/>
<dbReference type="Araport" id="AT3G51250"/>
<dbReference type="TAIR" id="AT3G51250"/>
<dbReference type="eggNOG" id="ENOG502QPY0">
    <property type="taxonomic scope" value="Eukaryota"/>
</dbReference>
<dbReference type="HOGENOM" id="CLU_034602_0_0_1"/>
<dbReference type="InParanoid" id="Q9SD22"/>
<dbReference type="OMA" id="PTIDMND"/>
<dbReference type="OrthoDB" id="20821at2759"/>
<dbReference type="PhylomeDB" id="Q9SD22"/>
<dbReference type="PRO" id="PR:Q9SD22"/>
<dbReference type="Proteomes" id="UP000006548">
    <property type="component" value="Chromosome 3"/>
</dbReference>
<dbReference type="ExpressionAtlas" id="Q9SD22">
    <property type="expression patterns" value="baseline and differential"/>
</dbReference>
<dbReference type="GO" id="GO:0009506">
    <property type="term" value="C:plasmodesma"/>
    <property type="evidence" value="ECO:0007005"/>
    <property type="project" value="TAIR"/>
</dbReference>
<dbReference type="InterPro" id="IPR009686">
    <property type="entry name" value="Senescence/spartin_C"/>
</dbReference>
<dbReference type="InterPro" id="IPR045036">
    <property type="entry name" value="Spartin-like"/>
</dbReference>
<dbReference type="PANTHER" id="PTHR21068">
    <property type="entry name" value="SPARTIN"/>
    <property type="match status" value="1"/>
</dbReference>
<dbReference type="PANTHER" id="PTHR21068:SF43">
    <property type="entry name" value="SPARTIN"/>
    <property type="match status" value="1"/>
</dbReference>
<dbReference type="Pfam" id="PF06911">
    <property type="entry name" value="Senescence"/>
    <property type="match status" value="1"/>
</dbReference>